<feature type="chain" id="PRO_0000390570" description="Prokaryotic ubiquitin-like protein Pup">
    <location>
        <begin position="1"/>
        <end position="71"/>
    </location>
</feature>
<feature type="region of interest" description="Disordered" evidence="2">
    <location>
        <begin position="1"/>
        <end position="30"/>
    </location>
</feature>
<feature type="region of interest" description="ARC ATPase binding" evidence="1">
    <location>
        <begin position="27"/>
        <end position="65"/>
    </location>
</feature>
<feature type="coiled-coil region" evidence="1">
    <location>
        <begin position="23"/>
        <end position="56"/>
    </location>
</feature>
<feature type="cross-link" description="Isoglutamyl lysine isopeptide (Glu-Lys) (interchain with K-? in acceptor proteins)" evidence="1">
    <location>
        <position position="71"/>
    </location>
</feature>
<organism>
    <name type="scientific">Bifidobacterium animalis subsp. lactis (strain AD011)</name>
    <dbReference type="NCBI Taxonomy" id="442563"/>
    <lineage>
        <taxon>Bacteria</taxon>
        <taxon>Bacillati</taxon>
        <taxon>Actinomycetota</taxon>
        <taxon>Actinomycetes</taxon>
        <taxon>Bifidobacteriales</taxon>
        <taxon>Bifidobacteriaceae</taxon>
        <taxon>Bifidobacterium</taxon>
    </lineage>
</organism>
<protein>
    <recommendedName>
        <fullName evidence="1">Prokaryotic ubiquitin-like protein Pup</fullName>
    </recommendedName>
    <alternativeName>
        <fullName evidence="1">Bacterial ubiquitin-like modifier</fullName>
    </alternativeName>
</protein>
<proteinExistence type="inferred from homology"/>
<reference key="1">
    <citation type="journal article" date="2009" name="J. Bacteriol.">
        <title>Genome sequence of the probiotic bacterium Bifidobacterium animalis subsp. lactis AD011.</title>
        <authorList>
            <person name="Kim J.F."/>
            <person name="Jeong H."/>
            <person name="Yu D.S."/>
            <person name="Choi S.-H."/>
            <person name="Hur C.-G."/>
            <person name="Park M.-S."/>
            <person name="Yoon S.H."/>
            <person name="Kim D.-W."/>
            <person name="Ji G.E."/>
            <person name="Park H.-S."/>
            <person name="Oh T.K."/>
        </authorList>
    </citation>
    <scope>NUCLEOTIDE SEQUENCE [LARGE SCALE GENOMIC DNA]</scope>
    <source>
        <strain>AD011</strain>
    </source>
</reference>
<dbReference type="EMBL" id="CP001213">
    <property type="protein sequence ID" value="ACL29456.1"/>
    <property type="molecule type" value="Genomic_DNA"/>
</dbReference>
<dbReference type="RefSeq" id="WP_004218910.1">
    <property type="nucleotide sequence ID" value="NC_011835.1"/>
</dbReference>
<dbReference type="SMR" id="B8DTX7"/>
<dbReference type="STRING" id="442563.BLA_1168"/>
<dbReference type="KEGG" id="bla:BLA_1168"/>
<dbReference type="PATRIC" id="fig|442563.4.peg.1226"/>
<dbReference type="HOGENOM" id="CLU_183816_0_0_11"/>
<dbReference type="UniPathway" id="UPA00997"/>
<dbReference type="Proteomes" id="UP000002456">
    <property type="component" value="Chromosome"/>
</dbReference>
<dbReference type="GO" id="GO:0070628">
    <property type="term" value="F:proteasome binding"/>
    <property type="evidence" value="ECO:0007669"/>
    <property type="project" value="UniProtKB-UniRule"/>
</dbReference>
<dbReference type="GO" id="GO:0031386">
    <property type="term" value="F:protein tag activity"/>
    <property type="evidence" value="ECO:0007669"/>
    <property type="project" value="UniProtKB-UniRule"/>
</dbReference>
<dbReference type="GO" id="GO:0019941">
    <property type="term" value="P:modification-dependent protein catabolic process"/>
    <property type="evidence" value="ECO:0007669"/>
    <property type="project" value="UniProtKB-UniRule"/>
</dbReference>
<dbReference type="GO" id="GO:0010498">
    <property type="term" value="P:proteasomal protein catabolic process"/>
    <property type="evidence" value="ECO:0007669"/>
    <property type="project" value="UniProtKB-UniRule"/>
</dbReference>
<dbReference type="GO" id="GO:0070490">
    <property type="term" value="P:protein pupylation"/>
    <property type="evidence" value="ECO:0007669"/>
    <property type="project" value="UniProtKB-UniRule"/>
</dbReference>
<dbReference type="HAMAP" id="MF_02106">
    <property type="entry name" value="Pup"/>
    <property type="match status" value="1"/>
</dbReference>
<dbReference type="InterPro" id="IPR008515">
    <property type="entry name" value="Ubiquitin-like_Pup"/>
</dbReference>
<dbReference type="NCBIfam" id="TIGR03687">
    <property type="entry name" value="pupylate_cterm"/>
    <property type="match status" value="1"/>
</dbReference>
<dbReference type="Pfam" id="PF05639">
    <property type="entry name" value="Pup"/>
    <property type="match status" value="1"/>
</dbReference>
<name>PUP_BIFA0</name>
<evidence type="ECO:0000255" key="1">
    <source>
        <dbReference type="HAMAP-Rule" id="MF_02106"/>
    </source>
</evidence>
<evidence type="ECO:0000256" key="2">
    <source>
        <dbReference type="SAM" id="MobiDB-lite"/>
    </source>
</evidence>
<accession>B8DTX7</accession>
<gene>
    <name evidence="1" type="primary">pup</name>
    <name type="ordered locus">BLA_1168</name>
</gene>
<sequence>MPSASGHHQIPAETQRHDDDQTQETAQGLSAAAMLAQEQADDLDAILDDIETVLETNAEEYVSSFVQKGGE</sequence>
<keyword id="KW-0175">Coiled coil</keyword>
<keyword id="KW-1017">Isopeptide bond</keyword>
<keyword id="KW-1185">Reference proteome</keyword>
<keyword id="KW-0833">Ubl conjugation pathway</keyword>
<comment type="function">
    <text evidence="1">Protein modifier that is covalently attached to lysine residues of substrate proteins, thereby targeting them for proteasomal degradation. The tagging system is termed pupylation.</text>
</comment>
<comment type="pathway">
    <text evidence="1">Protein degradation; proteasomal Pup-dependent pathway.</text>
</comment>
<comment type="subunit">
    <text evidence="1">Strongly interacts with the proteasome-associated ATPase ARC through a hydrophobic interface; the interacting region of Pup lies in its C-terminal half. There is one Pup binding site per ARC hexamer ring.</text>
</comment>
<comment type="domain">
    <text evidence="1">The N-terminal unstructured half of Pup provides a signal required to initiate unfolding and degradation by the proteasome but is not needed for pupylation, while the C-terminal helical half of Pup interacts with ARC to target proteins to the proteasome.</text>
</comment>
<comment type="similarity">
    <text evidence="1">Belongs to the prokaryotic ubiquitin-like protein family.</text>
</comment>